<protein>
    <recommendedName>
        <fullName>Uncharacterized protein C1420.01c</fullName>
    </recommendedName>
</protein>
<name>YIJ1_SCHPO</name>
<reference key="1">
    <citation type="journal article" date="2002" name="Nature">
        <title>The genome sequence of Schizosaccharomyces pombe.</title>
        <authorList>
            <person name="Wood V."/>
            <person name="Gwilliam R."/>
            <person name="Rajandream M.A."/>
            <person name="Lyne M.H."/>
            <person name="Lyne R."/>
            <person name="Stewart A."/>
            <person name="Sgouros J.G."/>
            <person name="Peat N."/>
            <person name="Hayles J."/>
            <person name="Baker S.G."/>
            <person name="Basham D."/>
            <person name="Bowman S."/>
            <person name="Brooks K."/>
            <person name="Brown D."/>
            <person name="Brown S."/>
            <person name="Chillingworth T."/>
            <person name="Churcher C.M."/>
            <person name="Collins M."/>
            <person name="Connor R."/>
            <person name="Cronin A."/>
            <person name="Davis P."/>
            <person name="Feltwell T."/>
            <person name="Fraser A."/>
            <person name="Gentles S."/>
            <person name="Goble A."/>
            <person name="Hamlin N."/>
            <person name="Harris D.E."/>
            <person name="Hidalgo J."/>
            <person name="Hodgson G."/>
            <person name="Holroyd S."/>
            <person name="Hornsby T."/>
            <person name="Howarth S."/>
            <person name="Huckle E.J."/>
            <person name="Hunt S."/>
            <person name="Jagels K."/>
            <person name="James K.D."/>
            <person name="Jones L."/>
            <person name="Jones M."/>
            <person name="Leather S."/>
            <person name="McDonald S."/>
            <person name="McLean J."/>
            <person name="Mooney P."/>
            <person name="Moule S."/>
            <person name="Mungall K.L."/>
            <person name="Murphy L.D."/>
            <person name="Niblett D."/>
            <person name="Odell C."/>
            <person name="Oliver K."/>
            <person name="O'Neil S."/>
            <person name="Pearson D."/>
            <person name="Quail M.A."/>
            <person name="Rabbinowitsch E."/>
            <person name="Rutherford K.M."/>
            <person name="Rutter S."/>
            <person name="Saunders D."/>
            <person name="Seeger K."/>
            <person name="Sharp S."/>
            <person name="Skelton J."/>
            <person name="Simmonds M.N."/>
            <person name="Squares R."/>
            <person name="Squares S."/>
            <person name="Stevens K."/>
            <person name="Taylor K."/>
            <person name="Taylor R.G."/>
            <person name="Tivey A."/>
            <person name="Walsh S.V."/>
            <person name="Warren T."/>
            <person name="Whitehead S."/>
            <person name="Woodward J.R."/>
            <person name="Volckaert G."/>
            <person name="Aert R."/>
            <person name="Robben J."/>
            <person name="Grymonprez B."/>
            <person name="Weltjens I."/>
            <person name="Vanstreels E."/>
            <person name="Rieger M."/>
            <person name="Schaefer M."/>
            <person name="Mueller-Auer S."/>
            <person name="Gabel C."/>
            <person name="Fuchs M."/>
            <person name="Duesterhoeft A."/>
            <person name="Fritzc C."/>
            <person name="Holzer E."/>
            <person name="Moestl D."/>
            <person name="Hilbert H."/>
            <person name="Borzym K."/>
            <person name="Langer I."/>
            <person name="Beck A."/>
            <person name="Lehrach H."/>
            <person name="Reinhardt R."/>
            <person name="Pohl T.M."/>
            <person name="Eger P."/>
            <person name="Zimmermann W."/>
            <person name="Wedler H."/>
            <person name="Wambutt R."/>
            <person name="Purnelle B."/>
            <person name="Goffeau A."/>
            <person name="Cadieu E."/>
            <person name="Dreano S."/>
            <person name="Gloux S."/>
            <person name="Lelaure V."/>
            <person name="Mottier S."/>
            <person name="Galibert F."/>
            <person name="Aves S.J."/>
            <person name="Xiang Z."/>
            <person name="Hunt C."/>
            <person name="Moore K."/>
            <person name="Hurst S.M."/>
            <person name="Lucas M."/>
            <person name="Rochet M."/>
            <person name="Gaillardin C."/>
            <person name="Tallada V.A."/>
            <person name="Garzon A."/>
            <person name="Thode G."/>
            <person name="Daga R.R."/>
            <person name="Cruzado L."/>
            <person name="Jimenez J."/>
            <person name="Sanchez M."/>
            <person name="del Rey F."/>
            <person name="Benito J."/>
            <person name="Dominguez A."/>
            <person name="Revuelta J.L."/>
            <person name="Moreno S."/>
            <person name="Armstrong J."/>
            <person name="Forsburg S.L."/>
            <person name="Cerutti L."/>
            <person name="Lowe T."/>
            <person name="McCombie W.R."/>
            <person name="Paulsen I."/>
            <person name="Potashkin J."/>
            <person name="Shpakovski G.V."/>
            <person name="Ussery D."/>
            <person name="Barrell B.G."/>
            <person name="Nurse P."/>
        </authorList>
    </citation>
    <scope>NUCLEOTIDE SEQUENCE [LARGE SCALE GENOMIC DNA]</scope>
    <source>
        <strain>972 / ATCC 24843</strain>
    </source>
</reference>
<sequence length="580" mass="63480">MAKRVVSPNPMLSLETENIAKMGTLTADSLGSMWNVFTKCAENLENGRRLENISWRLWYREAMMSDANDACQIACQESSVPDLSSSCDSINSTVESDAGHVVDSNSFNRIDNVSVNAPIVNEVSLQAPMKGGSHSSIVRPQAKRSSSRLLSTDAFSQFISSFSPPEKPSMKDLALFHGNKSPSSKETIPKVSNSNSSDTSTDDQAYLNVSVSENEHADRSIKTHSSAPPLNQQKSSTSVNDAVSKAIQLVKSTSDLGSLSTNTSSTAQKNKSRKPTKSFSDAVAAASRAKELEKEKLSKVTVTPDDSTSIIRGFDPRLPVLSTKNVSHEEKSHSVQDDKSKQLLKPNPTQPYFYLRGSFDTGHSASSSICSAAVDSESVNSADFPHRTVYDPLPTHAIAESISQENVIEDDDDDDDAWVSVDEAESPHFTKRSPAPYLSKSFRNSALSLLLSQDEKLQHDVRSASSAALNLPRDTDIKATPNLSQSGNINSDNSDLSNYPYNDYRVYRMSHCSSNSNKVLASEISESLRRDLLWERRQKAAMNSAVLRRQSSQSSGANDDKEVRNRKVVEKGFANDCSVW</sequence>
<dbReference type="EMBL" id="CU329670">
    <property type="protein sequence ID" value="CAB16400.2"/>
    <property type="molecule type" value="Genomic_DNA"/>
</dbReference>
<dbReference type="PIR" id="T37664">
    <property type="entry name" value="T37664"/>
</dbReference>
<dbReference type="RefSeq" id="XP_001713049.1">
    <property type="nucleotide sequence ID" value="XM_001712997.2"/>
</dbReference>
<dbReference type="BioGRID" id="279293">
    <property type="interactions" value="6"/>
</dbReference>
<dbReference type="FunCoup" id="Q9UTM5">
    <property type="interactions" value="417"/>
</dbReference>
<dbReference type="STRING" id="284812.Q9UTM5"/>
<dbReference type="iPTMnet" id="Q9UTM5"/>
<dbReference type="PaxDb" id="4896-SPAC1420.01c.1"/>
<dbReference type="EnsemblFungi" id="SPAC1420.01c.1">
    <property type="protein sequence ID" value="SPAC1420.01c.1:pep"/>
    <property type="gene ID" value="SPAC1420.01c"/>
</dbReference>
<dbReference type="PomBase" id="SPAC1420.01c"/>
<dbReference type="VEuPathDB" id="FungiDB:SPAC1420.01c"/>
<dbReference type="eggNOG" id="ENOG502SAS5">
    <property type="taxonomic scope" value="Eukaryota"/>
</dbReference>
<dbReference type="HOGENOM" id="CLU_025004_1_0_1"/>
<dbReference type="InParanoid" id="Q9UTM5"/>
<dbReference type="OMA" id="NGYHSKG"/>
<dbReference type="PhylomeDB" id="Q9UTM5"/>
<dbReference type="PRO" id="PR:Q9UTM5"/>
<dbReference type="Proteomes" id="UP000002485">
    <property type="component" value="Chromosome I"/>
</dbReference>
<dbReference type="GO" id="GO:0005737">
    <property type="term" value="C:cytoplasm"/>
    <property type="evidence" value="ECO:0000318"/>
    <property type="project" value="GO_Central"/>
</dbReference>
<dbReference type="GO" id="GO:0005829">
    <property type="term" value="C:cytosol"/>
    <property type="evidence" value="ECO:0007005"/>
    <property type="project" value="PomBase"/>
</dbReference>
<dbReference type="GO" id="GO:0034605">
    <property type="term" value="P:cellular response to heat"/>
    <property type="evidence" value="ECO:0000269"/>
    <property type="project" value="PomBase"/>
</dbReference>
<dbReference type="GO" id="GO:0031930">
    <property type="term" value="P:mitochondria-nucleus signaling pathway"/>
    <property type="evidence" value="ECO:0000318"/>
    <property type="project" value="GO_Central"/>
</dbReference>
<dbReference type="GO" id="GO:0000122">
    <property type="term" value="P:negative regulation of transcription by RNA polymerase II"/>
    <property type="evidence" value="ECO:0000318"/>
    <property type="project" value="GO_Central"/>
</dbReference>
<dbReference type="GO" id="GO:0006808">
    <property type="term" value="P:regulation of nitrogen utilization"/>
    <property type="evidence" value="ECO:0000318"/>
    <property type="project" value="GO_Central"/>
</dbReference>
<dbReference type="InterPro" id="IPR013860">
    <property type="entry name" value="AreA_GATA"/>
</dbReference>
<dbReference type="InterPro" id="IPR053043">
    <property type="entry name" value="Ras-cAMP_regulatory"/>
</dbReference>
<dbReference type="PANTHER" id="PTHR28014">
    <property type="entry name" value="NEGATIVE REGULATOR OF RAS-CAMP PATHWAY"/>
    <property type="match status" value="1"/>
</dbReference>
<dbReference type="PANTHER" id="PTHR28014:SF1">
    <property type="entry name" value="NEGATIVE REGULATOR OF RAS-CAMP PATHWAY"/>
    <property type="match status" value="1"/>
</dbReference>
<dbReference type="Pfam" id="PF08550">
    <property type="entry name" value="GATA_AreA"/>
    <property type="match status" value="1"/>
</dbReference>
<proteinExistence type="predicted"/>
<keyword id="KW-1185">Reference proteome</keyword>
<gene>
    <name type="ORF">SPAC1420.01c</name>
    <name type="ORF">SPAC56E4.08c</name>
</gene>
<evidence type="ECO:0000256" key="1">
    <source>
        <dbReference type="SAM" id="MobiDB-lite"/>
    </source>
</evidence>
<feature type="chain" id="PRO_0000116792" description="Uncharacterized protein C1420.01c">
    <location>
        <begin position="1"/>
        <end position="580"/>
    </location>
</feature>
<feature type="region of interest" description="Disordered" evidence="1">
    <location>
        <begin position="161"/>
        <end position="241"/>
    </location>
</feature>
<feature type="region of interest" description="Disordered" evidence="1">
    <location>
        <begin position="256"/>
        <end position="281"/>
    </location>
</feature>
<feature type="region of interest" description="Disordered" evidence="1">
    <location>
        <begin position="325"/>
        <end position="345"/>
    </location>
</feature>
<feature type="region of interest" description="Disordered" evidence="1">
    <location>
        <begin position="472"/>
        <end position="495"/>
    </location>
</feature>
<feature type="region of interest" description="Disordered" evidence="1">
    <location>
        <begin position="544"/>
        <end position="564"/>
    </location>
</feature>
<feature type="compositionally biased region" description="Low complexity" evidence="1">
    <location>
        <begin position="192"/>
        <end position="203"/>
    </location>
</feature>
<feature type="compositionally biased region" description="Polar residues" evidence="1">
    <location>
        <begin position="223"/>
        <end position="241"/>
    </location>
</feature>
<feature type="compositionally biased region" description="Polar residues" evidence="1">
    <location>
        <begin position="256"/>
        <end position="269"/>
    </location>
</feature>
<feature type="compositionally biased region" description="Basic and acidic residues" evidence="1">
    <location>
        <begin position="326"/>
        <end position="341"/>
    </location>
</feature>
<feature type="compositionally biased region" description="Polar residues" evidence="1">
    <location>
        <begin position="481"/>
        <end position="495"/>
    </location>
</feature>
<accession>Q9UTM5</accession>
<accession>O94558</accession>
<organism>
    <name type="scientific">Schizosaccharomyces pombe (strain 972 / ATCC 24843)</name>
    <name type="common">Fission yeast</name>
    <dbReference type="NCBI Taxonomy" id="284812"/>
    <lineage>
        <taxon>Eukaryota</taxon>
        <taxon>Fungi</taxon>
        <taxon>Dikarya</taxon>
        <taxon>Ascomycota</taxon>
        <taxon>Taphrinomycotina</taxon>
        <taxon>Schizosaccharomycetes</taxon>
        <taxon>Schizosaccharomycetales</taxon>
        <taxon>Schizosaccharomycetaceae</taxon>
        <taxon>Schizosaccharomyces</taxon>
    </lineage>
</organism>